<name>LDH2_BIFL2</name>
<feature type="initiator methionine" description="Removed" evidence="1">
    <location>
        <position position="1"/>
    </location>
</feature>
<feature type="chain" id="PRO_0000409353" description="L-lactate dehydrogenase 2">
    <location>
        <begin position="2"/>
        <end position="320"/>
    </location>
</feature>
<feature type="active site" description="Proton acceptor" evidence="2 7 10">
    <location>
        <position position="181"/>
    </location>
</feature>
<feature type="binding site" evidence="2 3 4 9 10">
    <location>
        <begin position="18"/>
        <end position="19"/>
    </location>
    <ligand>
        <name>NAD(+)</name>
        <dbReference type="ChEBI" id="CHEBI:57540"/>
    </ligand>
</feature>
<feature type="binding site" evidence="2 3 4 9 10">
    <location>
        <position position="40"/>
    </location>
    <ligand>
        <name>NAD(+)</name>
        <dbReference type="ChEBI" id="CHEBI:57540"/>
    </ligand>
</feature>
<feature type="binding site" evidence="3 4 9 10">
    <location>
        <position position="45"/>
    </location>
    <ligand>
        <name>NAD(+)</name>
        <dbReference type="ChEBI" id="CHEBI:57540"/>
    </ligand>
</feature>
<feature type="binding site" evidence="2">
    <location>
        <position position="88"/>
    </location>
    <ligand>
        <name>substrate</name>
    </ligand>
</feature>
<feature type="binding site" evidence="2">
    <location>
        <position position="94"/>
    </location>
    <ligand>
        <name>substrate</name>
    </ligand>
</feature>
<feature type="binding site" evidence="2 3 4 9 10">
    <location>
        <begin position="124"/>
        <end position="126"/>
    </location>
    <ligand>
        <name>NAD(+)</name>
        <dbReference type="ChEBI" id="CHEBI:57540"/>
    </ligand>
</feature>
<feature type="binding site" evidence="2 7 10">
    <location>
        <begin position="126"/>
        <end position="129"/>
    </location>
    <ligand>
        <name>substrate</name>
    </ligand>
</feature>
<feature type="binding site" evidence="2">
    <location>
        <position position="149"/>
    </location>
    <ligand>
        <name>NAD(+)</name>
        <dbReference type="ChEBI" id="CHEBI:57540"/>
    </ligand>
</feature>
<feature type="binding site" evidence="2 7 10">
    <location>
        <begin position="154"/>
        <end position="157"/>
    </location>
    <ligand>
        <name>substrate</name>
    </ligand>
</feature>
<feature type="binding site" evidence="2 3 10">
    <location>
        <position position="159"/>
    </location>
    <ligand>
        <name>beta-D-fructose 1,6-bisphosphate</name>
        <dbReference type="ChEBI" id="CHEBI:32966"/>
        <note>allosteric activator</note>
    </ligand>
</feature>
<feature type="binding site" evidence="3 10">
    <location>
        <begin position="171"/>
        <end position="176"/>
    </location>
    <ligand>
        <name>beta-D-fructose 1,6-bisphosphate</name>
        <dbReference type="ChEBI" id="CHEBI:32966"/>
        <note>allosteric activator</note>
    </ligand>
</feature>
<feature type="binding site" evidence="2 7 10">
    <location>
        <position position="237"/>
    </location>
    <ligand>
        <name>substrate</name>
    </ligand>
</feature>
<feature type="modified residue" description="Phosphotyrosine" evidence="2">
    <location>
        <position position="228"/>
    </location>
</feature>
<feature type="strand" evidence="11">
    <location>
        <begin position="10"/>
        <end position="14"/>
    </location>
</feature>
<feature type="helix" evidence="11">
    <location>
        <begin position="18"/>
        <end position="29"/>
    </location>
</feature>
<feature type="strand" evidence="11">
    <location>
        <begin position="34"/>
        <end position="39"/>
    </location>
</feature>
<feature type="helix" evidence="11">
    <location>
        <begin position="43"/>
        <end position="55"/>
    </location>
</feature>
<feature type="helix" evidence="11">
    <location>
        <begin position="56"/>
        <end position="59"/>
    </location>
</feature>
<feature type="strand" evidence="11">
    <location>
        <begin position="64"/>
        <end position="69"/>
    </location>
</feature>
<feature type="helix" evidence="11">
    <location>
        <begin position="71"/>
        <end position="74"/>
    </location>
</feature>
<feature type="strand" evidence="11">
    <location>
        <begin position="78"/>
        <end position="82"/>
    </location>
</feature>
<feature type="helix" evidence="11">
    <location>
        <begin position="94"/>
        <end position="115"/>
    </location>
</feature>
<feature type="strand" evidence="11">
    <location>
        <begin position="119"/>
        <end position="123"/>
    </location>
</feature>
<feature type="helix" evidence="11">
    <location>
        <begin position="128"/>
        <end position="139"/>
    </location>
</feature>
<feature type="strand" evidence="11">
    <location>
        <begin position="145"/>
        <end position="148"/>
    </location>
</feature>
<feature type="helix" evidence="11">
    <location>
        <begin position="152"/>
        <end position="166"/>
    </location>
</feature>
<feature type="helix" evidence="11">
    <location>
        <begin position="170"/>
        <end position="172"/>
    </location>
</feature>
<feature type="strand" evidence="11">
    <location>
        <begin position="177"/>
        <end position="182"/>
    </location>
</feature>
<feature type="helix" evidence="12">
    <location>
        <begin position="189"/>
        <end position="191"/>
    </location>
</feature>
<feature type="helix" evidence="11">
    <location>
        <begin position="199"/>
        <end position="201"/>
    </location>
</feature>
<feature type="helix" evidence="11">
    <location>
        <begin position="213"/>
        <end position="231"/>
    </location>
</feature>
<feature type="helix" evidence="11">
    <location>
        <begin position="239"/>
        <end position="253"/>
    </location>
</feature>
<feature type="strand" evidence="11">
    <location>
        <begin position="258"/>
        <end position="265"/>
    </location>
</feature>
<feature type="strand" evidence="11">
    <location>
        <begin position="267"/>
        <end position="269"/>
    </location>
</feature>
<feature type="strand" evidence="11">
    <location>
        <begin position="274"/>
        <end position="284"/>
    </location>
</feature>
<feature type="strand" evidence="11">
    <location>
        <begin position="287"/>
        <end position="289"/>
    </location>
</feature>
<feature type="helix" evidence="11">
    <location>
        <begin position="298"/>
        <end position="316"/>
    </location>
</feature>
<feature type="turn" evidence="11">
    <location>
        <begin position="317"/>
        <end position="319"/>
    </location>
</feature>
<gene>
    <name evidence="2" type="primary">ldh2</name>
    <name type="ordered locus">BLLJ_1290</name>
</gene>
<organism>
    <name type="scientific">Bifidobacterium longum subsp. longum (strain ATCC 15707 / DSM 20219 / JCM 1217 / NCTC 11818 / E194b)</name>
    <dbReference type="NCBI Taxonomy" id="565042"/>
    <lineage>
        <taxon>Bacteria</taxon>
        <taxon>Bacillati</taxon>
        <taxon>Actinomycetota</taxon>
        <taxon>Actinomycetes</taxon>
        <taxon>Bifidobacteriales</taxon>
        <taxon>Bifidobacteriaceae</taxon>
        <taxon>Bifidobacterium</taxon>
    </lineage>
</organism>
<reference key="1">
    <citation type="journal article" date="2011" name="Nature">
        <title>Bifidobacteria can protect from enteropathogenic infection through production of acetate.</title>
        <authorList>
            <person name="Fukuda S."/>
            <person name="Toh H."/>
            <person name="Hase K."/>
            <person name="Oshima K."/>
            <person name="Nakanishi Y."/>
            <person name="Yoshimura K."/>
            <person name="Tobe T."/>
            <person name="Clarke J.M."/>
            <person name="Topping D.L."/>
            <person name="Suzuki T."/>
            <person name="Taylor T.D."/>
            <person name="Itoh K."/>
            <person name="Kikuchi J."/>
            <person name="Morita H."/>
            <person name="Hattori M."/>
            <person name="Ohno H."/>
        </authorList>
    </citation>
    <scope>NUCLEOTIDE SEQUENCE [LARGE SCALE GENOMIC DNA]</scope>
    <source>
        <strain>ATCC 15707 / DSM 20219 / CCUG 28903 / JCM 1217 / NCIMB 702259 / NCTC 11818 / E194b</strain>
    </source>
</reference>
<reference key="2">
    <citation type="submission" date="2000-04" db="EMBL/GenBank/DDBJ databases">
        <authorList>
            <person name="Roy D."/>
            <person name="Sirois S."/>
        </authorList>
    </citation>
    <scope>NUCLEOTIDE SEQUENCE [GENOMIC DNA] OF 130-233</scope>
    <source>
        <strain>ATCC 15707 / DSM 20219 / CCUG 28903 / JCM 1217 / NCIMB 702259 / NCTC 11818 / E194b</strain>
    </source>
</reference>
<reference key="3">
    <citation type="journal article" date="1993" name="J. Mol. Biol.">
        <title>Molecular basis of allosteric activation of bacterial L-lactate dehydrogenase.</title>
        <authorList>
            <person name="Iwata S."/>
            <person name="Ohta T."/>
        </authorList>
    </citation>
    <scope>X-RAY CRYSTALLOGRAPHY (2.0 ANGSTROMS) IN COMPLEX WITH NAD</scope>
    <scope>ACTIVITY REGULATION</scope>
    <scope>SUBUNIT</scope>
    <source>
        <strain>AM 101-2</strain>
    </source>
</reference>
<reference key="4">
    <citation type="journal article" date="1994" name="Nat. Struct. Biol.">
        <title>T and R states in the crystals of bacterial L-lactate dehydrogenase reveal the mechanism for allosteric control.</title>
        <authorList>
            <person name="Iwata S."/>
            <person name="Kamata K."/>
            <person name="Yoshida S."/>
            <person name="Ohta T."/>
        </authorList>
    </citation>
    <scope>X-RAY CRYSTALLOGRAPHY (2.5 ANGSTROMS) IN COMPLEX WITH NAD; SUBSTRATE ANALOG AND FRUCTOSE 1,6-BISPHOSPHATE</scope>
    <scope>ACTIVITY REGULATION</scope>
    <scope>ACTIVE SITE</scope>
    <scope>SUBUNIT</scope>
    <source>
        <strain>AM 101-2</strain>
    </source>
</reference>
<sequence length="320" mass="34240">MAETTVKPTKLAVIGAGAVGSTLAFAAAQRGIAREIVLEDIAKERVEAEVLDMQHGSSFYPTVSIDGSDDPEICRDADMVVITAGPRQKPGQSRLELVGATVNILKAIMPNLVKVAPNAIYMLITNPVDIATHVAQKLTGLPENQIFGSGTNLDSARLRFLIAQQTGVNVKNVHAYIAGEHGDSEVPLWESATIGGVPMCDWTPLPGHDPLDADKREEIHQEVKNAAYKIINGKGATNYAIGMSGVDIIEAVLHDTNRILPVSSMLKDFHGISDICMSVPTLLNRQGVNNTINTPVSDKELAALKRSAETLKETAAQFGF</sequence>
<keyword id="KW-0002">3D-structure</keyword>
<keyword id="KW-0021">Allosteric enzyme</keyword>
<keyword id="KW-0963">Cytoplasm</keyword>
<keyword id="KW-0520">NAD</keyword>
<keyword id="KW-0560">Oxidoreductase</keyword>
<keyword id="KW-0597">Phosphoprotein</keyword>
<comment type="function">
    <text evidence="2">Catalyzes the conversion of lactate to pyruvate.</text>
</comment>
<comment type="catalytic activity">
    <reaction evidence="2">
        <text>(S)-lactate + NAD(+) = pyruvate + NADH + H(+)</text>
        <dbReference type="Rhea" id="RHEA:23444"/>
        <dbReference type="ChEBI" id="CHEBI:15361"/>
        <dbReference type="ChEBI" id="CHEBI:15378"/>
        <dbReference type="ChEBI" id="CHEBI:16651"/>
        <dbReference type="ChEBI" id="CHEBI:57540"/>
        <dbReference type="ChEBI" id="CHEBI:57945"/>
        <dbReference type="EC" id="1.1.1.27"/>
    </reaction>
</comment>
<comment type="activity regulation">
    <text evidence="2 3 8">Allosterically activated by fructose 1,6-bisphosphate (FBP).</text>
</comment>
<comment type="pathway">
    <text evidence="2">Fermentation; pyruvate fermentation to lactate; (S)-lactate from pyruvate: step 1/1.</text>
</comment>
<comment type="subunit">
    <text evidence="2 3 4">Homotetramer.</text>
</comment>
<comment type="subcellular location">
    <subcellularLocation>
        <location evidence="2">Cytoplasm</location>
    </subcellularLocation>
</comment>
<comment type="similarity">
    <text evidence="2 6">Belongs to the LDH/MDH superfamily. LDH family.</text>
</comment>
<accession>E8ME30</accession>
<accession>P19869</accession>
<accession>Q9L505</accession>
<accession>Q9L506</accession>
<protein>
    <recommendedName>
        <fullName evidence="2 5">L-lactate dehydrogenase 2</fullName>
        <shortName evidence="2 5">L-LDH 2</shortName>
        <ecNumber evidence="2">1.1.1.27</ecNumber>
    </recommendedName>
    <alternativeName>
        <fullName evidence="5">FBP-dependent LDH</fullName>
    </alternativeName>
</protein>
<proteinExistence type="evidence at protein level"/>
<evidence type="ECO:0000250" key="1"/>
<evidence type="ECO:0000255" key="2">
    <source>
        <dbReference type="HAMAP-Rule" id="MF_00488"/>
    </source>
</evidence>
<evidence type="ECO:0000269" key="3">
    <source>
    </source>
</evidence>
<evidence type="ECO:0000269" key="4">
    <source>
    </source>
</evidence>
<evidence type="ECO:0000303" key="5">
    <source>
    </source>
</evidence>
<evidence type="ECO:0000305" key="6"/>
<evidence type="ECO:0000305" key="7">
    <source>
    </source>
</evidence>
<evidence type="ECO:0000305" key="8">
    <source>
    </source>
</evidence>
<evidence type="ECO:0007744" key="9">
    <source>
        <dbReference type="PDB" id="1LLD"/>
    </source>
</evidence>
<evidence type="ECO:0007744" key="10">
    <source>
        <dbReference type="PDB" id="1LTH"/>
    </source>
</evidence>
<evidence type="ECO:0007829" key="11">
    <source>
        <dbReference type="PDB" id="1LLD"/>
    </source>
</evidence>
<evidence type="ECO:0007829" key="12">
    <source>
        <dbReference type="PDB" id="1LTH"/>
    </source>
</evidence>
<dbReference type="EC" id="1.1.1.27" evidence="2"/>
<dbReference type="EMBL" id="AP010888">
    <property type="protein sequence ID" value="BAJ66957.1"/>
    <property type="molecule type" value="Genomic_DNA"/>
</dbReference>
<dbReference type="EMBL" id="AF261669">
    <property type="protein sequence ID" value="AAF70510.1"/>
    <property type="molecule type" value="Genomic_DNA"/>
</dbReference>
<dbReference type="RefSeq" id="WP_007052533.1">
    <property type="nucleotide sequence ID" value="NZ_CAXVKM010000004.1"/>
</dbReference>
<dbReference type="PDB" id="1LLD">
    <property type="method" value="X-ray"/>
    <property type="resolution" value="2.00 A"/>
    <property type="chains" value="A/B=2-320"/>
</dbReference>
<dbReference type="PDB" id="1LTH">
    <property type="method" value="X-ray"/>
    <property type="resolution" value="2.50 A"/>
    <property type="chains" value="R/T=2-320"/>
</dbReference>
<dbReference type="PDBsum" id="1LLD"/>
<dbReference type="PDBsum" id="1LTH"/>
<dbReference type="SMR" id="E8ME30"/>
<dbReference type="GeneID" id="69578509"/>
<dbReference type="KEGG" id="blm:BLLJ_1290"/>
<dbReference type="HOGENOM" id="CLU_045401_1_1_11"/>
<dbReference type="BioCyc" id="MetaCyc:MONOMER-13065"/>
<dbReference type="UniPathway" id="UPA00554">
    <property type="reaction ID" value="UER00611"/>
</dbReference>
<dbReference type="EvolutionaryTrace" id="E8ME30"/>
<dbReference type="GO" id="GO:0005737">
    <property type="term" value="C:cytoplasm"/>
    <property type="evidence" value="ECO:0007669"/>
    <property type="project" value="UniProtKB-SubCell"/>
</dbReference>
<dbReference type="GO" id="GO:0004459">
    <property type="term" value="F:L-lactate dehydrogenase activity"/>
    <property type="evidence" value="ECO:0007669"/>
    <property type="project" value="UniProtKB-UniRule"/>
</dbReference>
<dbReference type="GO" id="GO:0006096">
    <property type="term" value="P:glycolytic process"/>
    <property type="evidence" value="ECO:0007669"/>
    <property type="project" value="UniProtKB-UniRule"/>
</dbReference>
<dbReference type="GO" id="GO:0006089">
    <property type="term" value="P:lactate metabolic process"/>
    <property type="evidence" value="ECO:0007669"/>
    <property type="project" value="TreeGrafter"/>
</dbReference>
<dbReference type="CDD" id="cd05292">
    <property type="entry name" value="LDH_2"/>
    <property type="match status" value="1"/>
</dbReference>
<dbReference type="Gene3D" id="3.90.110.10">
    <property type="entry name" value="Lactate dehydrogenase/glycoside hydrolase, family 4, C-terminal"/>
    <property type="match status" value="1"/>
</dbReference>
<dbReference type="Gene3D" id="3.40.50.720">
    <property type="entry name" value="NAD(P)-binding Rossmann-like Domain"/>
    <property type="match status" value="1"/>
</dbReference>
<dbReference type="HAMAP" id="MF_00488">
    <property type="entry name" value="Lactate_dehydrog"/>
    <property type="match status" value="1"/>
</dbReference>
<dbReference type="InterPro" id="IPR001557">
    <property type="entry name" value="L-lactate/malate_DH"/>
</dbReference>
<dbReference type="InterPro" id="IPR011304">
    <property type="entry name" value="L-lactate_DH"/>
</dbReference>
<dbReference type="InterPro" id="IPR018177">
    <property type="entry name" value="L-lactate_DH_AS"/>
</dbReference>
<dbReference type="InterPro" id="IPR022383">
    <property type="entry name" value="Lactate/malate_DH_C"/>
</dbReference>
<dbReference type="InterPro" id="IPR001236">
    <property type="entry name" value="Lactate/malate_DH_N"/>
</dbReference>
<dbReference type="InterPro" id="IPR015955">
    <property type="entry name" value="Lactate_DH/Glyco_Ohase_4_C"/>
</dbReference>
<dbReference type="InterPro" id="IPR036291">
    <property type="entry name" value="NAD(P)-bd_dom_sf"/>
</dbReference>
<dbReference type="NCBIfam" id="TIGR01771">
    <property type="entry name" value="L-LDH-NAD"/>
    <property type="match status" value="1"/>
</dbReference>
<dbReference type="NCBIfam" id="NF004863">
    <property type="entry name" value="PRK06223.1"/>
    <property type="match status" value="1"/>
</dbReference>
<dbReference type="PANTHER" id="PTHR43128">
    <property type="entry name" value="L-2-HYDROXYCARBOXYLATE DEHYDROGENASE (NAD(P)(+))"/>
    <property type="match status" value="1"/>
</dbReference>
<dbReference type="PANTHER" id="PTHR43128:SF16">
    <property type="entry name" value="L-LACTATE DEHYDROGENASE"/>
    <property type="match status" value="1"/>
</dbReference>
<dbReference type="Pfam" id="PF02866">
    <property type="entry name" value="Ldh_1_C"/>
    <property type="match status" value="1"/>
</dbReference>
<dbReference type="Pfam" id="PF00056">
    <property type="entry name" value="Ldh_1_N"/>
    <property type="match status" value="1"/>
</dbReference>
<dbReference type="PIRSF" id="PIRSF000102">
    <property type="entry name" value="Lac_mal_DH"/>
    <property type="match status" value="1"/>
</dbReference>
<dbReference type="PRINTS" id="PR00086">
    <property type="entry name" value="LLDHDRGNASE"/>
</dbReference>
<dbReference type="SUPFAM" id="SSF56327">
    <property type="entry name" value="LDH C-terminal domain-like"/>
    <property type="match status" value="1"/>
</dbReference>
<dbReference type="SUPFAM" id="SSF51735">
    <property type="entry name" value="NAD(P)-binding Rossmann-fold domains"/>
    <property type="match status" value="1"/>
</dbReference>
<dbReference type="PROSITE" id="PS00064">
    <property type="entry name" value="L_LDH"/>
    <property type="match status" value="1"/>
</dbReference>